<keyword id="KW-0413">Isomerase</keyword>
<keyword id="KW-0819">tRNA processing</keyword>
<comment type="function">
    <text evidence="1">Formation of pseudouridine at positions 38, 39 and 40 in the anticodon stem and loop of transfer RNAs.</text>
</comment>
<comment type="catalytic activity">
    <reaction evidence="1">
        <text>uridine(38/39/40) in tRNA = pseudouridine(38/39/40) in tRNA</text>
        <dbReference type="Rhea" id="RHEA:22376"/>
        <dbReference type="Rhea" id="RHEA-COMP:10085"/>
        <dbReference type="Rhea" id="RHEA-COMP:10087"/>
        <dbReference type="ChEBI" id="CHEBI:65314"/>
        <dbReference type="ChEBI" id="CHEBI:65315"/>
        <dbReference type="EC" id="5.4.99.12"/>
    </reaction>
</comment>
<comment type="subunit">
    <text evidence="1">Homodimer.</text>
</comment>
<comment type="similarity">
    <text evidence="1">Belongs to the tRNA pseudouridine synthase TruA family.</text>
</comment>
<organism>
    <name type="scientific">Shewanella baltica (strain OS185)</name>
    <dbReference type="NCBI Taxonomy" id="402882"/>
    <lineage>
        <taxon>Bacteria</taxon>
        <taxon>Pseudomonadati</taxon>
        <taxon>Pseudomonadota</taxon>
        <taxon>Gammaproteobacteria</taxon>
        <taxon>Alteromonadales</taxon>
        <taxon>Shewanellaceae</taxon>
        <taxon>Shewanella</taxon>
    </lineage>
</organism>
<dbReference type="EC" id="5.4.99.12" evidence="1"/>
<dbReference type="EMBL" id="CP000753">
    <property type="protein sequence ID" value="ABS08893.1"/>
    <property type="molecule type" value="Genomic_DNA"/>
</dbReference>
<dbReference type="RefSeq" id="WP_012089586.1">
    <property type="nucleotide sequence ID" value="NC_009665.1"/>
</dbReference>
<dbReference type="SMR" id="A6WQ04"/>
<dbReference type="KEGG" id="sbm:Shew185_2759"/>
<dbReference type="HOGENOM" id="CLU_014673_0_2_6"/>
<dbReference type="GO" id="GO:0003723">
    <property type="term" value="F:RNA binding"/>
    <property type="evidence" value="ECO:0007669"/>
    <property type="project" value="InterPro"/>
</dbReference>
<dbReference type="GO" id="GO:0160147">
    <property type="term" value="F:tRNA pseudouridine(38-40) synthase activity"/>
    <property type="evidence" value="ECO:0007669"/>
    <property type="project" value="UniProtKB-EC"/>
</dbReference>
<dbReference type="GO" id="GO:0031119">
    <property type="term" value="P:tRNA pseudouridine synthesis"/>
    <property type="evidence" value="ECO:0007669"/>
    <property type="project" value="UniProtKB-UniRule"/>
</dbReference>
<dbReference type="CDD" id="cd02570">
    <property type="entry name" value="PseudoU_synth_EcTruA"/>
    <property type="match status" value="1"/>
</dbReference>
<dbReference type="FunFam" id="3.30.70.580:FF:000001">
    <property type="entry name" value="tRNA pseudouridine synthase A"/>
    <property type="match status" value="1"/>
</dbReference>
<dbReference type="FunFam" id="3.30.70.660:FF:000001">
    <property type="entry name" value="tRNA pseudouridine synthase A"/>
    <property type="match status" value="1"/>
</dbReference>
<dbReference type="Gene3D" id="3.30.70.660">
    <property type="entry name" value="Pseudouridine synthase I, catalytic domain, C-terminal subdomain"/>
    <property type="match status" value="1"/>
</dbReference>
<dbReference type="Gene3D" id="3.30.70.580">
    <property type="entry name" value="Pseudouridine synthase I, catalytic domain, N-terminal subdomain"/>
    <property type="match status" value="1"/>
</dbReference>
<dbReference type="HAMAP" id="MF_00171">
    <property type="entry name" value="TruA"/>
    <property type="match status" value="1"/>
</dbReference>
<dbReference type="InterPro" id="IPR020103">
    <property type="entry name" value="PsdUridine_synth_cat_dom_sf"/>
</dbReference>
<dbReference type="InterPro" id="IPR001406">
    <property type="entry name" value="PsdUridine_synth_TruA"/>
</dbReference>
<dbReference type="InterPro" id="IPR020097">
    <property type="entry name" value="PsdUridine_synth_TruA_a/b_dom"/>
</dbReference>
<dbReference type="InterPro" id="IPR020095">
    <property type="entry name" value="PsdUridine_synth_TruA_C"/>
</dbReference>
<dbReference type="InterPro" id="IPR020094">
    <property type="entry name" value="TruA/RsuA/RluB/E/F_N"/>
</dbReference>
<dbReference type="NCBIfam" id="TIGR00071">
    <property type="entry name" value="hisT_truA"/>
    <property type="match status" value="1"/>
</dbReference>
<dbReference type="PANTHER" id="PTHR11142">
    <property type="entry name" value="PSEUDOURIDYLATE SYNTHASE"/>
    <property type="match status" value="1"/>
</dbReference>
<dbReference type="PANTHER" id="PTHR11142:SF0">
    <property type="entry name" value="TRNA PSEUDOURIDINE SYNTHASE-LIKE 1"/>
    <property type="match status" value="1"/>
</dbReference>
<dbReference type="Pfam" id="PF01416">
    <property type="entry name" value="PseudoU_synth_1"/>
    <property type="match status" value="2"/>
</dbReference>
<dbReference type="PIRSF" id="PIRSF001430">
    <property type="entry name" value="tRNA_psdUrid_synth"/>
    <property type="match status" value="1"/>
</dbReference>
<dbReference type="SUPFAM" id="SSF55120">
    <property type="entry name" value="Pseudouridine synthase"/>
    <property type="match status" value="1"/>
</dbReference>
<sequence length="261" mass="29114">MRIALGIEYDGNGYFGWQRQAEVDSVQGQLERALSIVANEPIGVFCAGRTDAGVHATGQVVHFETNAIRNEGAWTLGVNANLPDNIAVRWVKEVDDSFHARFSATARRYRYVIYNHSFRPGILRHGVSHYHGDIDADRMHQAAQALLGEQDFTSFRAVQCQSKTPFRNVHCVNVTRQGMYVIVDIAANAFLHHMVRNIVGSLLEIGLGNQPLTWMGDLLALKDRNQAAATAKPHGLYLVDVTYPEQYQLPKLALGPLFMLD</sequence>
<gene>
    <name evidence="1" type="primary">truA</name>
    <name type="ordered locus">Shew185_2759</name>
</gene>
<proteinExistence type="inferred from homology"/>
<evidence type="ECO:0000255" key="1">
    <source>
        <dbReference type="HAMAP-Rule" id="MF_00171"/>
    </source>
</evidence>
<accession>A6WQ04</accession>
<feature type="chain" id="PRO_1000017166" description="tRNA pseudouridine synthase A">
    <location>
        <begin position="1"/>
        <end position="261"/>
    </location>
</feature>
<feature type="active site" description="Nucleophile" evidence="1">
    <location>
        <position position="51"/>
    </location>
</feature>
<feature type="binding site" evidence="1">
    <location>
        <position position="109"/>
    </location>
    <ligand>
        <name>substrate</name>
    </ligand>
</feature>
<name>TRUA_SHEB8</name>
<reference key="1">
    <citation type="submission" date="2007-07" db="EMBL/GenBank/DDBJ databases">
        <title>Complete sequence of chromosome of Shewanella baltica OS185.</title>
        <authorList>
            <consortium name="US DOE Joint Genome Institute"/>
            <person name="Copeland A."/>
            <person name="Lucas S."/>
            <person name="Lapidus A."/>
            <person name="Barry K."/>
            <person name="Glavina del Rio T."/>
            <person name="Dalin E."/>
            <person name="Tice H."/>
            <person name="Pitluck S."/>
            <person name="Sims D."/>
            <person name="Brettin T."/>
            <person name="Bruce D."/>
            <person name="Detter J.C."/>
            <person name="Han C."/>
            <person name="Schmutz J."/>
            <person name="Larimer F."/>
            <person name="Land M."/>
            <person name="Hauser L."/>
            <person name="Kyrpides N."/>
            <person name="Mikhailova N."/>
            <person name="Brettar I."/>
            <person name="Rodrigues J."/>
            <person name="Konstantinidis K."/>
            <person name="Tiedje J."/>
            <person name="Richardson P."/>
        </authorList>
    </citation>
    <scope>NUCLEOTIDE SEQUENCE [LARGE SCALE GENOMIC DNA]</scope>
    <source>
        <strain>OS185</strain>
    </source>
</reference>
<protein>
    <recommendedName>
        <fullName evidence="1">tRNA pseudouridine synthase A</fullName>
        <ecNumber evidence="1">5.4.99.12</ecNumber>
    </recommendedName>
    <alternativeName>
        <fullName evidence="1">tRNA pseudouridine(38-40) synthase</fullName>
    </alternativeName>
    <alternativeName>
        <fullName evidence="1">tRNA pseudouridylate synthase I</fullName>
    </alternativeName>
    <alternativeName>
        <fullName evidence="1">tRNA-uridine isomerase I</fullName>
    </alternativeName>
</protein>